<feature type="chain" id="PRO_1000079809" description="Large ribosomal subunit protein bL12">
    <location>
        <begin position="1"/>
        <end position="121"/>
    </location>
</feature>
<name>RL7_SALPB</name>
<dbReference type="EMBL" id="CP000886">
    <property type="protein sequence ID" value="ABX70421.1"/>
    <property type="molecule type" value="Genomic_DNA"/>
</dbReference>
<dbReference type="RefSeq" id="WP_000028882.1">
    <property type="nucleotide sequence ID" value="NC_010102.1"/>
</dbReference>
<dbReference type="BMRB" id="A9N0J3"/>
<dbReference type="SMR" id="A9N0J3"/>
<dbReference type="GeneID" id="89551069"/>
<dbReference type="KEGG" id="spq:SPAB_05140"/>
<dbReference type="PATRIC" id="fig|1016998.12.peg.4816"/>
<dbReference type="HOGENOM" id="CLU_086499_3_2_6"/>
<dbReference type="BioCyc" id="SENT1016998:SPAB_RS20920-MONOMER"/>
<dbReference type="Proteomes" id="UP000008556">
    <property type="component" value="Chromosome"/>
</dbReference>
<dbReference type="GO" id="GO:0022625">
    <property type="term" value="C:cytosolic large ribosomal subunit"/>
    <property type="evidence" value="ECO:0007669"/>
    <property type="project" value="TreeGrafter"/>
</dbReference>
<dbReference type="GO" id="GO:0003729">
    <property type="term" value="F:mRNA binding"/>
    <property type="evidence" value="ECO:0007669"/>
    <property type="project" value="TreeGrafter"/>
</dbReference>
<dbReference type="GO" id="GO:0003735">
    <property type="term" value="F:structural constituent of ribosome"/>
    <property type="evidence" value="ECO:0007669"/>
    <property type="project" value="InterPro"/>
</dbReference>
<dbReference type="GO" id="GO:0006412">
    <property type="term" value="P:translation"/>
    <property type="evidence" value="ECO:0007669"/>
    <property type="project" value="UniProtKB-UniRule"/>
</dbReference>
<dbReference type="CDD" id="cd00387">
    <property type="entry name" value="Ribosomal_L7_L12"/>
    <property type="match status" value="1"/>
</dbReference>
<dbReference type="FunFam" id="1.20.5.710:FF:000001">
    <property type="entry name" value="50S ribosomal protein L7/L12"/>
    <property type="match status" value="1"/>
</dbReference>
<dbReference type="FunFam" id="3.30.1390.10:FF:000001">
    <property type="entry name" value="50S ribosomal protein L7/L12"/>
    <property type="match status" value="1"/>
</dbReference>
<dbReference type="Gene3D" id="3.30.1390.10">
    <property type="match status" value="1"/>
</dbReference>
<dbReference type="Gene3D" id="1.20.5.710">
    <property type="entry name" value="Single helix bin"/>
    <property type="match status" value="1"/>
</dbReference>
<dbReference type="HAMAP" id="MF_00368">
    <property type="entry name" value="Ribosomal_bL12"/>
    <property type="match status" value="1"/>
</dbReference>
<dbReference type="InterPro" id="IPR000206">
    <property type="entry name" value="Ribosomal_bL12"/>
</dbReference>
<dbReference type="InterPro" id="IPR013823">
    <property type="entry name" value="Ribosomal_bL12_C"/>
</dbReference>
<dbReference type="InterPro" id="IPR014719">
    <property type="entry name" value="Ribosomal_bL12_C/ClpS-like"/>
</dbReference>
<dbReference type="InterPro" id="IPR008932">
    <property type="entry name" value="Ribosomal_bL12_oligo"/>
</dbReference>
<dbReference type="InterPro" id="IPR036235">
    <property type="entry name" value="Ribosomal_bL12_oligo_N_sf"/>
</dbReference>
<dbReference type="NCBIfam" id="TIGR00855">
    <property type="entry name" value="L12"/>
    <property type="match status" value="1"/>
</dbReference>
<dbReference type="PANTHER" id="PTHR45987">
    <property type="entry name" value="39S RIBOSOMAL PROTEIN L12"/>
    <property type="match status" value="1"/>
</dbReference>
<dbReference type="PANTHER" id="PTHR45987:SF4">
    <property type="entry name" value="LARGE RIBOSOMAL SUBUNIT PROTEIN BL12M"/>
    <property type="match status" value="1"/>
</dbReference>
<dbReference type="Pfam" id="PF00542">
    <property type="entry name" value="Ribosomal_L12"/>
    <property type="match status" value="1"/>
</dbReference>
<dbReference type="Pfam" id="PF16320">
    <property type="entry name" value="Ribosomal_L12_N"/>
    <property type="match status" value="1"/>
</dbReference>
<dbReference type="SUPFAM" id="SSF54736">
    <property type="entry name" value="ClpS-like"/>
    <property type="match status" value="1"/>
</dbReference>
<dbReference type="SUPFAM" id="SSF48300">
    <property type="entry name" value="Ribosomal protein L7/12, oligomerisation (N-terminal) domain"/>
    <property type="match status" value="1"/>
</dbReference>
<comment type="function">
    <text evidence="1">Forms part of the ribosomal stalk which helps the ribosome interact with GTP-bound translation factors. Is thus essential for accurate translation.</text>
</comment>
<comment type="subunit">
    <text evidence="1">Homodimer. Part of the ribosomal stalk of the 50S ribosomal subunit. Forms a multimeric L10(L12)X complex, where L10 forms an elongated spine to which 2 to 4 L12 dimers bind in a sequential fashion. Binds GTP-bound translation factors.</text>
</comment>
<comment type="similarity">
    <text evidence="1">Belongs to the bacterial ribosomal protein bL12 family.</text>
</comment>
<proteinExistence type="inferred from homology"/>
<sequence>MSITKDQIIEAVSAMSVMDVVELISAMEEKFGVSAAAAVAVAAGPAEAAEEKTEFDVILKAAGANKVAVIKAVRGATGLGLKEAKDLVESAPAALKEGVSKDDAEALKKSLEEAGAEVEVK</sequence>
<organism>
    <name type="scientific">Salmonella paratyphi B (strain ATCC BAA-1250 / SPB7)</name>
    <dbReference type="NCBI Taxonomy" id="1016998"/>
    <lineage>
        <taxon>Bacteria</taxon>
        <taxon>Pseudomonadati</taxon>
        <taxon>Pseudomonadota</taxon>
        <taxon>Gammaproteobacteria</taxon>
        <taxon>Enterobacterales</taxon>
        <taxon>Enterobacteriaceae</taxon>
        <taxon>Salmonella</taxon>
    </lineage>
</organism>
<reference key="1">
    <citation type="submission" date="2007-11" db="EMBL/GenBank/DDBJ databases">
        <authorList>
            <consortium name="The Salmonella enterica serovar Paratyphi B Genome Sequencing Project"/>
            <person name="McClelland M."/>
            <person name="Sanderson E.K."/>
            <person name="Porwollik S."/>
            <person name="Spieth J."/>
            <person name="Clifton W.S."/>
            <person name="Fulton R."/>
            <person name="Cordes M."/>
            <person name="Wollam A."/>
            <person name="Shah N."/>
            <person name="Pepin K."/>
            <person name="Bhonagiri V."/>
            <person name="Nash W."/>
            <person name="Johnson M."/>
            <person name="Thiruvilangam P."/>
            <person name="Wilson R."/>
        </authorList>
    </citation>
    <scope>NUCLEOTIDE SEQUENCE [LARGE SCALE GENOMIC DNA]</scope>
    <source>
        <strain>ATCC BAA-1250 / SPB7</strain>
    </source>
</reference>
<protein>
    <recommendedName>
        <fullName evidence="1">Large ribosomal subunit protein bL12</fullName>
    </recommendedName>
    <alternativeName>
        <fullName evidence="2">50S ribosomal protein L7/L12</fullName>
    </alternativeName>
</protein>
<gene>
    <name evidence="1" type="primary">rplL</name>
    <name type="ordered locus">SPAB_05140</name>
</gene>
<evidence type="ECO:0000255" key="1">
    <source>
        <dbReference type="HAMAP-Rule" id="MF_00368"/>
    </source>
</evidence>
<evidence type="ECO:0000305" key="2"/>
<accession>A9N0J3</accession>
<keyword id="KW-0687">Ribonucleoprotein</keyword>
<keyword id="KW-0689">Ribosomal protein</keyword>